<proteinExistence type="inferred from homology"/>
<name>UBIB_PSEP7</name>
<evidence type="ECO:0000255" key="1">
    <source>
        <dbReference type="HAMAP-Rule" id="MF_00414"/>
    </source>
</evidence>
<dbReference type="EC" id="2.7.-.-" evidence="1"/>
<dbReference type="EMBL" id="CP000744">
    <property type="protein sequence ID" value="ABR86163.1"/>
    <property type="molecule type" value="Genomic_DNA"/>
</dbReference>
<dbReference type="RefSeq" id="WP_003155133.1">
    <property type="nucleotide sequence ID" value="NC_009656.1"/>
</dbReference>
<dbReference type="SMR" id="A6VDI8"/>
<dbReference type="GeneID" id="77223602"/>
<dbReference type="KEGG" id="pap:PSPA7_5804"/>
<dbReference type="HOGENOM" id="CLU_006533_0_0_6"/>
<dbReference type="UniPathway" id="UPA00232"/>
<dbReference type="Proteomes" id="UP000001582">
    <property type="component" value="Chromosome"/>
</dbReference>
<dbReference type="GO" id="GO:0005886">
    <property type="term" value="C:plasma membrane"/>
    <property type="evidence" value="ECO:0007669"/>
    <property type="project" value="UniProtKB-SubCell"/>
</dbReference>
<dbReference type="GO" id="GO:0005524">
    <property type="term" value="F:ATP binding"/>
    <property type="evidence" value="ECO:0007669"/>
    <property type="project" value="UniProtKB-KW"/>
</dbReference>
<dbReference type="GO" id="GO:0004672">
    <property type="term" value="F:protein kinase activity"/>
    <property type="evidence" value="ECO:0007669"/>
    <property type="project" value="UniProtKB-UniRule"/>
</dbReference>
<dbReference type="GO" id="GO:0010795">
    <property type="term" value="P:regulation of ubiquinone biosynthetic process"/>
    <property type="evidence" value="ECO:0007669"/>
    <property type="project" value="UniProtKB-UniRule"/>
</dbReference>
<dbReference type="GO" id="GO:0006744">
    <property type="term" value="P:ubiquinone biosynthetic process"/>
    <property type="evidence" value="ECO:0007669"/>
    <property type="project" value="UniProtKB-UniPathway"/>
</dbReference>
<dbReference type="CDD" id="cd13972">
    <property type="entry name" value="UbiB"/>
    <property type="match status" value="1"/>
</dbReference>
<dbReference type="HAMAP" id="MF_00414">
    <property type="entry name" value="UbiB"/>
    <property type="match status" value="1"/>
</dbReference>
<dbReference type="InterPro" id="IPR004147">
    <property type="entry name" value="ABC1_dom"/>
</dbReference>
<dbReference type="InterPro" id="IPR011009">
    <property type="entry name" value="Kinase-like_dom_sf"/>
</dbReference>
<dbReference type="InterPro" id="IPR010232">
    <property type="entry name" value="UbiB"/>
</dbReference>
<dbReference type="InterPro" id="IPR045308">
    <property type="entry name" value="UbiB_bact"/>
</dbReference>
<dbReference type="InterPro" id="IPR050154">
    <property type="entry name" value="UbiB_kinase"/>
</dbReference>
<dbReference type="NCBIfam" id="NF003404">
    <property type="entry name" value="PRK04750.1"/>
    <property type="match status" value="1"/>
</dbReference>
<dbReference type="NCBIfam" id="TIGR01982">
    <property type="entry name" value="UbiB"/>
    <property type="match status" value="1"/>
</dbReference>
<dbReference type="PANTHER" id="PTHR10566">
    <property type="entry name" value="CHAPERONE-ACTIVITY OF BC1 COMPLEX CABC1 -RELATED"/>
    <property type="match status" value="1"/>
</dbReference>
<dbReference type="PANTHER" id="PTHR10566:SF113">
    <property type="entry name" value="PROTEIN ACTIVITY OF BC1 COMPLEX KINASE 7, CHLOROPLASTIC"/>
    <property type="match status" value="1"/>
</dbReference>
<dbReference type="Pfam" id="PF03109">
    <property type="entry name" value="ABC1"/>
    <property type="match status" value="1"/>
</dbReference>
<dbReference type="SUPFAM" id="SSF56112">
    <property type="entry name" value="Protein kinase-like (PK-like)"/>
    <property type="match status" value="1"/>
</dbReference>
<accession>A6VDI8</accession>
<protein>
    <recommendedName>
        <fullName evidence="1">Probable protein kinase UbiB</fullName>
        <ecNumber evidence="1">2.7.-.-</ecNumber>
    </recommendedName>
    <alternativeName>
        <fullName evidence="1">Ubiquinone biosynthesis protein UbiB</fullName>
    </alternativeName>
</protein>
<organism>
    <name type="scientific">Pseudomonas paraeruginosa (strain DSM 24068 / PA7)</name>
    <name type="common">Pseudomonas aeruginosa (strain PA7)</name>
    <dbReference type="NCBI Taxonomy" id="381754"/>
    <lineage>
        <taxon>Bacteria</taxon>
        <taxon>Pseudomonadati</taxon>
        <taxon>Pseudomonadota</taxon>
        <taxon>Gammaproteobacteria</taxon>
        <taxon>Pseudomonadales</taxon>
        <taxon>Pseudomonadaceae</taxon>
        <taxon>Pseudomonas</taxon>
        <taxon>Pseudomonas paraeruginosa</taxon>
    </lineage>
</organism>
<feature type="chain" id="PRO_1000060067" description="Probable protein kinase UbiB">
    <location>
        <begin position="1"/>
        <end position="533"/>
    </location>
</feature>
<feature type="transmembrane region" description="Helical" evidence="1">
    <location>
        <begin position="24"/>
        <end position="44"/>
    </location>
</feature>
<feature type="transmembrane region" description="Helical" evidence="1">
    <location>
        <begin position="510"/>
        <end position="530"/>
    </location>
</feature>
<feature type="domain" description="Protein kinase" evidence="1">
    <location>
        <begin position="126"/>
        <end position="494"/>
    </location>
</feature>
<feature type="active site" description="Proton acceptor" evidence="1">
    <location>
        <position position="289"/>
    </location>
</feature>
<feature type="binding site" evidence="1">
    <location>
        <begin position="132"/>
        <end position="140"/>
    </location>
    <ligand>
        <name>ATP</name>
        <dbReference type="ChEBI" id="CHEBI:30616"/>
    </ligand>
</feature>
<feature type="binding site" evidence="1">
    <location>
        <position position="154"/>
    </location>
    <ligand>
        <name>ATP</name>
        <dbReference type="ChEBI" id="CHEBI:30616"/>
    </ligand>
</feature>
<reference key="1">
    <citation type="submission" date="2007-06" db="EMBL/GenBank/DDBJ databases">
        <authorList>
            <person name="Dodson R.J."/>
            <person name="Harkins D."/>
            <person name="Paulsen I.T."/>
        </authorList>
    </citation>
    <scope>NUCLEOTIDE SEQUENCE [LARGE SCALE GENOMIC DNA]</scope>
    <source>
        <strain>DSM 24068 / PA7</strain>
    </source>
</reference>
<gene>
    <name evidence="1" type="primary">ubiB</name>
    <name type="ordered locus">PSPA7_5804</name>
</gene>
<keyword id="KW-0067">ATP-binding</keyword>
<keyword id="KW-0997">Cell inner membrane</keyword>
<keyword id="KW-1003">Cell membrane</keyword>
<keyword id="KW-0418">Kinase</keyword>
<keyword id="KW-0472">Membrane</keyword>
<keyword id="KW-0547">Nucleotide-binding</keyword>
<keyword id="KW-0808">Transferase</keyword>
<keyword id="KW-0812">Transmembrane</keyword>
<keyword id="KW-1133">Transmembrane helix</keyword>
<keyword id="KW-0831">Ubiquinone biosynthesis</keyword>
<sequence length="533" mass="61756">MKLLAFRRLLRIQRVVVRYRLDDLILELPMLPWWLRLLGAALPWRWLPRRKLELTRGARLRLALQDLGPIFIKFGQILSTRRDLLPDDIANELAWLQDKVPPFPPELAVKRIEEQLGAKIEQVFARFEREPLASASVAQVHAARLKSGEEVVVKVIRPNLEPVIRSDIAWLFILARLAERVSSEARRLHPVEVVSDYEKTIVDELDLLREAANASQLRRNFEGSPLLYVPQVYWDWCRPKVLVMERIYGIPVTDLETLRDQRTDFKALAERGVEIFFTQVFRDSFFHADMHPGNIFVSTRAPWSPQYIAVDCGIVGSLTDEDQDYLARNLIAFFKRDYRKVAQLHIDSGWVPAETKVNDFEAAIRTVCEPIFEKPLKDISFGQVLLRLFQTARRFNMEIQPQLVLLQKTLLNIEGLGRQLYPELDLWATAQPFLERWMRERVSPKQLLRNFQQQVEQVPHLSQMARDTLERLSQPHAHNAPPPEWKSSRHDWLGRLVGAVLLVGAAEVGLGQQLEAWPAWVMLAGGVFLILRR</sequence>
<comment type="function">
    <text evidence="1">Is probably a protein kinase regulator of UbiI activity which is involved in aerobic coenzyme Q (ubiquinone) biosynthesis.</text>
</comment>
<comment type="pathway">
    <text>Cofactor biosynthesis; ubiquinone biosynthesis [regulation].</text>
</comment>
<comment type="subcellular location">
    <subcellularLocation>
        <location evidence="1">Cell inner membrane</location>
        <topology evidence="1">Multi-pass membrane protein</topology>
    </subcellularLocation>
</comment>
<comment type="similarity">
    <text evidence="1">Belongs to the ABC1 family. UbiB subfamily.</text>
</comment>